<gene>
    <name type="primary">manA</name>
    <name type="synonym">pmi</name>
    <name type="synonym">yjdE</name>
    <name type="ordered locus">BSU12020</name>
</gene>
<accession>O31646</accession>
<proteinExistence type="evidence at transcript level"/>
<name>MANA1_BACSU</name>
<evidence type="ECO:0000250" key="1"/>
<evidence type="ECO:0000250" key="2">
    <source>
        <dbReference type="UniProtKB" id="P34948"/>
    </source>
</evidence>
<evidence type="ECO:0000250" key="3">
    <source>
        <dbReference type="UniProtKB" id="P39841"/>
    </source>
</evidence>
<evidence type="ECO:0000269" key="4">
    <source>
    </source>
</evidence>
<evidence type="ECO:0000269" key="5">
    <source>
    </source>
</evidence>
<evidence type="ECO:0000305" key="6"/>
<protein>
    <recommendedName>
        <fullName>Mannose-6-phosphate isomerase ManA</fullName>
        <ecNumber>5.3.1.8</ecNumber>
    </recommendedName>
    <alternativeName>
        <fullName>Phosphohexomutase</fullName>
    </alternativeName>
    <alternativeName>
        <fullName>Phosphomannose isomerase</fullName>
        <shortName>PMI</shortName>
    </alternativeName>
</protein>
<comment type="catalytic activity">
    <reaction>
        <text>D-mannose 6-phosphate = D-fructose 6-phosphate</text>
        <dbReference type="Rhea" id="RHEA:12356"/>
        <dbReference type="ChEBI" id="CHEBI:58735"/>
        <dbReference type="ChEBI" id="CHEBI:61527"/>
        <dbReference type="EC" id="5.3.1.8"/>
    </reaction>
</comment>
<comment type="cofactor">
    <cofactor evidence="1">
        <name>Zn(2+)</name>
        <dbReference type="ChEBI" id="CHEBI:29105"/>
    </cofactor>
    <text evidence="1">Binds 1 zinc ion per subunit.</text>
</comment>
<comment type="induction">
    <text evidence="5">Up-regulated by mannose. Is under the control of ManR. Is subject to carbon catabolite repression (CCR) by glucose. Forms part of an operon with manP and yjdF.</text>
</comment>
<comment type="disruption phenotype">
    <text evidence="4 5">Cells lacking this gene are unable to grow in minimal medium with mannose as the sole carbon source. They show impaired growth in rich medium, and impairment increases in the presence of greater than 1.4 mM mannose.</text>
</comment>
<comment type="similarity">
    <text evidence="6">Belongs to the mannose-6-phosphate isomerase type 1 family.</text>
</comment>
<sequence length="315" mass="36003">MTTEPLFFKPVFKERIWGGTALADFGYTIPSQRTGECWAFAAHQNGQSVVQNGMYKGFTLSELWEHHRHLFGQLEGDRFPLLTKILDADQDLSVQVHPNDEYANIHENGELGKTECWYIIDCQKDAEIIYGHNATTKEELTTMIERGEWDELLRRVKVKPGDFFYVPSGTVHAIGKGILALETQQNSDTTYRLYDYDRKDAEGKLRELHLKKSIEVIEVPSIPERHTVHHEQIEDLLTTTLIECAYFSVGKWNLSGSASLKQQKPFLLISVIEGEGRMISGEYVYPFKKGDHMLLPYGLGEFKLEGYAECIVSHL</sequence>
<reference key="1">
    <citation type="journal article" date="1997" name="Nature">
        <title>The complete genome sequence of the Gram-positive bacterium Bacillus subtilis.</title>
        <authorList>
            <person name="Kunst F."/>
            <person name="Ogasawara N."/>
            <person name="Moszer I."/>
            <person name="Albertini A.M."/>
            <person name="Alloni G."/>
            <person name="Azevedo V."/>
            <person name="Bertero M.G."/>
            <person name="Bessieres P."/>
            <person name="Bolotin A."/>
            <person name="Borchert S."/>
            <person name="Borriss R."/>
            <person name="Boursier L."/>
            <person name="Brans A."/>
            <person name="Braun M."/>
            <person name="Brignell S.C."/>
            <person name="Bron S."/>
            <person name="Brouillet S."/>
            <person name="Bruschi C.V."/>
            <person name="Caldwell B."/>
            <person name="Capuano V."/>
            <person name="Carter N.M."/>
            <person name="Choi S.-K."/>
            <person name="Codani J.-J."/>
            <person name="Connerton I.F."/>
            <person name="Cummings N.J."/>
            <person name="Daniel R.A."/>
            <person name="Denizot F."/>
            <person name="Devine K.M."/>
            <person name="Duesterhoeft A."/>
            <person name="Ehrlich S.D."/>
            <person name="Emmerson P.T."/>
            <person name="Entian K.-D."/>
            <person name="Errington J."/>
            <person name="Fabret C."/>
            <person name="Ferrari E."/>
            <person name="Foulger D."/>
            <person name="Fritz C."/>
            <person name="Fujita M."/>
            <person name="Fujita Y."/>
            <person name="Fuma S."/>
            <person name="Galizzi A."/>
            <person name="Galleron N."/>
            <person name="Ghim S.-Y."/>
            <person name="Glaser P."/>
            <person name="Goffeau A."/>
            <person name="Golightly E.J."/>
            <person name="Grandi G."/>
            <person name="Guiseppi G."/>
            <person name="Guy B.J."/>
            <person name="Haga K."/>
            <person name="Haiech J."/>
            <person name="Harwood C.R."/>
            <person name="Henaut A."/>
            <person name="Hilbert H."/>
            <person name="Holsappel S."/>
            <person name="Hosono S."/>
            <person name="Hullo M.-F."/>
            <person name="Itaya M."/>
            <person name="Jones L.-M."/>
            <person name="Joris B."/>
            <person name="Karamata D."/>
            <person name="Kasahara Y."/>
            <person name="Klaerr-Blanchard M."/>
            <person name="Klein C."/>
            <person name="Kobayashi Y."/>
            <person name="Koetter P."/>
            <person name="Koningstein G."/>
            <person name="Krogh S."/>
            <person name="Kumano M."/>
            <person name="Kurita K."/>
            <person name="Lapidus A."/>
            <person name="Lardinois S."/>
            <person name="Lauber J."/>
            <person name="Lazarevic V."/>
            <person name="Lee S.-M."/>
            <person name="Levine A."/>
            <person name="Liu H."/>
            <person name="Masuda S."/>
            <person name="Mauel C."/>
            <person name="Medigue C."/>
            <person name="Medina N."/>
            <person name="Mellado R.P."/>
            <person name="Mizuno M."/>
            <person name="Moestl D."/>
            <person name="Nakai S."/>
            <person name="Noback M."/>
            <person name="Noone D."/>
            <person name="O'Reilly M."/>
            <person name="Ogawa K."/>
            <person name="Ogiwara A."/>
            <person name="Oudega B."/>
            <person name="Park S.-H."/>
            <person name="Parro V."/>
            <person name="Pohl T.M."/>
            <person name="Portetelle D."/>
            <person name="Porwollik S."/>
            <person name="Prescott A.M."/>
            <person name="Presecan E."/>
            <person name="Pujic P."/>
            <person name="Purnelle B."/>
            <person name="Rapoport G."/>
            <person name="Rey M."/>
            <person name="Reynolds S."/>
            <person name="Rieger M."/>
            <person name="Rivolta C."/>
            <person name="Rocha E."/>
            <person name="Roche B."/>
            <person name="Rose M."/>
            <person name="Sadaie Y."/>
            <person name="Sato T."/>
            <person name="Scanlan E."/>
            <person name="Schleich S."/>
            <person name="Schroeter R."/>
            <person name="Scoffone F."/>
            <person name="Sekiguchi J."/>
            <person name="Sekowska A."/>
            <person name="Seror S.J."/>
            <person name="Serror P."/>
            <person name="Shin B.-S."/>
            <person name="Soldo B."/>
            <person name="Sorokin A."/>
            <person name="Tacconi E."/>
            <person name="Takagi T."/>
            <person name="Takahashi H."/>
            <person name="Takemaru K."/>
            <person name="Takeuchi M."/>
            <person name="Tamakoshi A."/>
            <person name="Tanaka T."/>
            <person name="Terpstra P."/>
            <person name="Tognoni A."/>
            <person name="Tosato V."/>
            <person name="Uchiyama S."/>
            <person name="Vandenbol M."/>
            <person name="Vannier F."/>
            <person name="Vassarotti A."/>
            <person name="Viari A."/>
            <person name="Wambutt R."/>
            <person name="Wedler E."/>
            <person name="Wedler H."/>
            <person name="Weitzenegger T."/>
            <person name="Winters P."/>
            <person name="Wipat A."/>
            <person name="Yamamoto H."/>
            <person name="Yamane K."/>
            <person name="Yasumoto K."/>
            <person name="Yata K."/>
            <person name="Yoshida K."/>
            <person name="Yoshikawa H.-F."/>
            <person name="Zumstein E."/>
            <person name="Yoshikawa H."/>
            <person name="Danchin A."/>
        </authorList>
    </citation>
    <scope>NUCLEOTIDE SEQUENCE [LARGE SCALE GENOMIC DNA]</scope>
    <source>
        <strain>168</strain>
    </source>
</reference>
<reference key="2">
    <citation type="journal article" date="1999" name="Microbiology">
        <title>Novel phosphotransferase system genes revealed by genome analysis - the complete complement of PTS proteins encoded within the genome of Bacillus subtilis.</title>
        <authorList>
            <person name="Reizer J."/>
            <person name="Bachem S."/>
            <person name="Reizer A."/>
            <person name="Arnaud M."/>
            <person name="Saier M.H. Jr."/>
            <person name="Stuelke J."/>
        </authorList>
    </citation>
    <scope>GENE NAME</scope>
    <source>
        <strain>168</strain>
    </source>
</reference>
<reference key="3">
    <citation type="journal article" date="2000" name="J. Bacteriol.">
        <title>Mutations in multidrug efflux homologs, sugar isomerases, and antimicrobial biosynthesis genes differentially elevate activity of the sigma(X) and sigma(W) factors in Bacillus subtilis.</title>
        <authorList>
            <person name="Turner M.S."/>
            <person name="Helmann J.D."/>
        </authorList>
    </citation>
    <scope>DISRUPTION PHENOTYPE</scope>
    <source>
        <strain>168</strain>
    </source>
</reference>
<reference key="4">
    <citation type="journal article" date="2010" name="J. Bacteriol.">
        <title>Characterization of a mannose utilization system in Bacillus subtilis.</title>
        <authorList>
            <person name="Sun T."/>
            <person name="Altenbuchner J."/>
        </authorList>
    </citation>
    <scope>INDUCTION</scope>
    <scope>DISRUPTION PHENOTYPE</scope>
</reference>
<dbReference type="EC" id="5.3.1.8"/>
<dbReference type="EMBL" id="AL009126">
    <property type="protein sequence ID" value="CAB13059.1"/>
    <property type="molecule type" value="Genomic_DNA"/>
</dbReference>
<dbReference type="PIR" id="H69848">
    <property type="entry name" value="H69848"/>
</dbReference>
<dbReference type="RefSeq" id="NP_389084.1">
    <property type="nucleotide sequence ID" value="NC_000964.3"/>
</dbReference>
<dbReference type="RefSeq" id="WP_003232833.1">
    <property type="nucleotide sequence ID" value="NZ_OZ025638.1"/>
</dbReference>
<dbReference type="SMR" id="O31646"/>
<dbReference type="FunCoup" id="O31646">
    <property type="interactions" value="224"/>
</dbReference>
<dbReference type="STRING" id="224308.BSU12020"/>
<dbReference type="jPOST" id="O31646"/>
<dbReference type="PaxDb" id="224308-BSU12020"/>
<dbReference type="EnsemblBacteria" id="CAB13059">
    <property type="protein sequence ID" value="CAB13059"/>
    <property type="gene ID" value="BSU_12020"/>
</dbReference>
<dbReference type="GeneID" id="939393"/>
<dbReference type="KEGG" id="bsu:BSU12020"/>
<dbReference type="PATRIC" id="fig|224308.179.peg.1297"/>
<dbReference type="eggNOG" id="COG1482">
    <property type="taxonomic scope" value="Bacteria"/>
</dbReference>
<dbReference type="InParanoid" id="O31646"/>
<dbReference type="OrthoDB" id="9808275at2"/>
<dbReference type="PhylomeDB" id="O31646"/>
<dbReference type="BioCyc" id="BSUB:BSU12020-MONOMER"/>
<dbReference type="Proteomes" id="UP000001570">
    <property type="component" value="Chromosome"/>
</dbReference>
<dbReference type="GO" id="GO:0004476">
    <property type="term" value="F:mannose-6-phosphate isomerase activity"/>
    <property type="evidence" value="ECO:0007669"/>
    <property type="project" value="UniProtKB-EC"/>
</dbReference>
<dbReference type="GO" id="GO:0008270">
    <property type="term" value="F:zinc ion binding"/>
    <property type="evidence" value="ECO:0007669"/>
    <property type="project" value="InterPro"/>
</dbReference>
<dbReference type="GO" id="GO:0005975">
    <property type="term" value="P:carbohydrate metabolic process"/>
    <property type="evidence" value="ECO:0007669"/>
    <property type="project" value="InterPro"/>
</dbReference>
<dbReference type="CDD" id="cd07010">
    <property type="entry name" value="cupin_PMI_type_I_N_bac"/>
    <property type="match status" value="1"/>
</dbReference>
<dbReference type="FunFam" id="2.60.120.10:FF:000070">
    <property type="entry name" value="Mannose-6-phosphate isomerase"/>
    <property type="match status" value="1"/>
</dbReference>
<dbReference type="Gene3D" id="2.60.120.10">
    <property type="entry name" value="Jelly Rolls"/>
    <property type="match status" value="2"/>
</dbReference>
<dbReference type="InterPro" id="IPR051804">
    <property type="entry name" value="Carb_Metab_Reg_Kinase/Isom"/>
</dbReference>
<dbReference type="InterPro" id="IPR001250">
    <property type="entry name" value="Man6P_Isoase-1"/>
</dbReference>
<dbReference type="InterPro" id="IPR014628">
    <property type="entry name" value="Man6P_isomerase_Firm_short"/>
</dbReference>
<dbReference type="InterPro" id="IPR049071">
    <property type="entry name" value="MPI_cupin_dom"/>
</dbReference>
<dbReference type="InterPro" id="IPR046457">
    <property type="entry name" value="PMI_typeI_cat"/>
</dbReference>
<dbReference type="InterPro" id="IPR014710">
    <property type="entry name" value="RmlC-like_jellyroll"/>
</dbReference>
<dbReference type="InterPro" id="IPR011051">
    <property type="entry name" value="RmlC_Cupin_sf"/>
</dbReference>
<dbReference type="NCBIfam" id="TIGR00218">
    <property type="entry name" value="manA"/>
    <property type="match status" value="2"/>
</dbReference>
<dbReference type="PANTHER" id="PTHR42742:SF3">
    <property type="entry name" value="FRUCTOKINASE"/>
    <property type="match status" value="1"/>
</dbReference>
<dbReference type="PANTHER" id="PTHR42742">
    <property type="entry name" value="TRANSCRIPTIONAL REPRESSOR MPRA"/>
    <property type="match status" value="1"/>
</dbReference>
<dbReference type="Pfam" id="PF21621">
    <property type="entry name" value="MPI_cupin_dom"/>
    <property type="match status" value="1"/>
</dbReference>
<dbReference type="Pfam" id="PF20511">
    <property type="entry name" value="PMI_typeI_cat"/>
    <property type="match status" value="1"/>
</dbReference>
<dbReference type="PIRSF" id="PIRSF036894">
    <property type="entry name" value="PMI_Firm_short"/>
    <property type="match status" value="1"/>
</dbReference>
<dbReference type="SUPFAM" id="SSF51182">
    <property type="entry name" value="RmlC-like cupins"/>
    <property type="match status" value="1"/>
</dbReference>
<keyword id="KW-0413">Isomerase</keyword>
<keyword id="KW-0479">Metal-binding</keyword>
<keyword id="KW-1185">Reference proteome</keyword>
<keyword id="KW-0862">Zinc</keyword>
<organism>
    <name type="scientific">Bacillus subtilis (strain 168)</name>
    <dbReference type="NCBI Taxonomy" id="224308"/>
    <lineage>
        <taxon>Bacteria</taxon>
        <taxon>Bacillati</taxon>
        <taxon>Bacillota</taxon>
        <taxon>Bacilli</taxon>
        <taxon>Bacillales</taxon>
        <taxon>Bacillaceae</taxon>
        <taxon>Bacillus</taxon>
    </lineage>
</organism>
<feature type="chain" id="PRO_0000371314" description="Mannose-6-phosphate isomerase ManA">
    <location>
        <begin position="1"/>
        <end position="315"/>
    </location>
</feature>
<feature type="active site" evidence="2">
    <location>
        <position position="192"/>
    </location>
</feature>
<feature type="binding site" evidence="3">
    <location>
        <position position="97"/>
    </location>
    <ligand>
        <name>Zn(2+)</name>
        <dbReference type="ChEBI" id="CHEBI:29105"/>
    </ligand>
</feature>
<feature type="binding site" evidence="3">
    <location>
        <position position="115"/>
    </location>
    <ligand>
        <name>Zn(2+)</name>
        <dbReference type="ChEBI" id="CHEBI:29105"/>
    </ligand>
</feature>
<feature type="binding site" evidence="3">
    <location>
        <position position="172"/>
    </location>
    <ligand>
        <name>Zn(2+)</name>
        <dbReference type="ChEBI" id="CHEBI:29105"/>
    </ligand>
</feature>